<name>RPOY_BACMK</name>
<organism>
    <name type="scientific">Bacillus mycoides (strain KBAB4)</name>
    <name type="common">Bacillus weihenstephanensis</name>
    <dbReference type="NCBI Taxonomy" id="315730"/>
    <lineage>
        <taxon>Bacteria</taxon>
        <taxon>Bacillati</taxon>
        <taxon>Bacillota</taxon>
        <taxon>Bacilli</taxon>
        <taxon>Bacillales</taxon>
        <taxon>Bacillaceae</taxon>
        <taxon>Bacillus</taxon>
        <taxon>Bacillus cereus group</taxon>
    </lineage>
</organism>
<accession>A9VUD8</accession>
<gene>
    <name evidence="1" type="primary">rpoY</name>
    <name type="ordered locus">BcerKBAB4_3803</name>
</gene>
<sequence>MIFKVFYQEKLTEVPVRENTKVLYLEATSQKDVRKKLNKFAYNIEFVQSVTGAHLEYEKQNADLILAEIV</sequence>
<keyword id="KW-0240">DNA-directed RNA polymerase</keyword>
<keyword id="KW-0548">Nucleotidyltransferase</keyword>
<keyword id="KW-0804">Transcription</keyword>
<keyword id="KW-0808">Transferase</keyword>
<protein>
    <recommendedName>
        <fullName evidence="1">DNA-directed RNA polymerase subunit epsilon</fullName>
        <shortName evidence="1">RNAP epsilon subunit</shortName>
        <ecNumber evidence="1">2.7.7.6</ecNumber>
    </recommendedName>
    <alternativeName>
        <fullName evidence="1">RNA polymerase epsilon subunit</fullName>
    </alternativeName>
    <alternativeName>
        <fullName evidence="1">Transcriptase subunit epsilon</fullName>
    </alternativeName>
</protein>
<reference key="1">
    <citation type="journal article" date="2008" name="Chem. Biol. Interact.">
        <title>Extending the Bacillus cereus group genomics to putative food-borne pathogens of different toxicity.</title>
        <authorList>
            <person name="Lapidus A."/>
            <person name="Goltsman E."/>
            <person name="Auger S."/>
            <person name="Galleron N."/>
            <person name="Segurens B."/>
            <person name="Dossat C."/>
            <person name="Land M.L."/>
            <person name="Broussolle V."/>
            <person name="Brillard J."/>
            <person name="Guinebretiere M.-H."/>
            <person name="Sanchis V."/>
            <person name="Nguen-the C."/>
            <person name="Lereclus D."/>
            <person name="Richardson P."/>
            <person name="Wincker P."/>
            <person name="Weissenbach J."/>
            <person name="Ehrlich S.D."/>
            <person name="Sorokin A."/>
        </authorList>
    </citation>
    <scope>NUCLEOTIDE SEQUENCE [LARGE SCALE GENOMIC DNA]</scope>
    <source>
        <strain>KBAB4</strain>
    </source>
</reference>
<comment type="function">
    <text evidence="1">A non-essential component of RNA polymerase (RNAP).</text>
</comment>
<comment type="catalytic activity">
    <reaction evidence="1">
        <text>RNA(n) + a ribonucleoside 5'-triphosphate = RNA(n+1) + diphosphate</text>
        <dbReference type="Rhea" id="RHEA:21248"/>
        <dbReference type="Rhea" id="RHEA-COMP:14527"/>
        <dbReference type="Rhea" id="RHEA-COMP:17342"/>
        <dbReference type="ChEBI" id="CHEBI:33019"/>
        <dbReference type="ChEBI" id="CHEBI:61557"/>
        <dbReference type="ChEBI" id="CHEBI:140395"/>
        <dbReference type="EC" id="2.7.7.6"/>
    </reaction>
</comment>
<comment type="subunit">
    <text evidence="1">RNAP is composed of a core of 2 alpha, a beta and a beta' subunit. The core is associated with a delta subunit, and at least one of epsilon or omega. When a sigma factor is associated with the core the holoenzyme is formed, which can initiate transcription.</text>
</comment>
<comment type="similarity">
    <text evidence="1">Belongs to the RNA polymerase subunit epsilon family.</text>
</comment>
<dbReference type="EC" id="2.7.7.6" evidence="1"/>
<dbReference type="EMBL" id="CP000903">
    <property type="protein sequence ID" value="ABY44972.1"/>
    <property type="molecule type" value="Genomic_DNA"/>
</dbReference>
<dbReference type="RefSeq" id="WP_000576436.1">
    <property type="nucleotide sequence ID" value="NC_010184.1"/>
</dbReference>
<dbReference type="SMR" id="A9VUD8"/>
<dbReference type="KEGG" id="bwe:BcerKBAB4_3803"/>
<dbReference type="eggNOG" id="COG5503">
    <property type="taxonomic scope" value="Bacteria"/>
</dbReference>
<dbReference type="HOGENOM" id="CLU_187518_0_0_9"/>
<dbReference type="Proteomes" id="UP000002154">
    <property type="component" value="Chromosome"/>
</dbReference>
<dbReference type="GO" id="GO:0000428">
    <property type="term" value="C:DNA-directed RNA polymerase complex"/>
    <property type="evidence" value="ECO:0007669"/>
    <property type="project" value="UniProtKB-KW"/>
</dbReference>
<dbReference type="GO" id="GO:0003677">
    <property type="term" value="F:DNA binding"/>
    <property type="evidence" value="ECO:0007669"/>
    <property type="project" value="UniProtKB-UniRule"/>
</dbReference>
<dbReference type="GO" id="GO:0003899">
    <property type="term" value="F:DNA-directed RNA polymerase activity"/>
    <property type="evidence" value="ECO:0007669"/>
    <property type="project" value="UniProtKB-UniRule"/>
</dbReference>
<dbReference type="GO" id="GO:0006351">
    <property type="term" value="P:DNA-templated transcription"/>
    <property type="evidence" value="ECO:0007669"/>
    <property type="project" value="UniProtKB-UniRule"/>
</dbReference>
<dbReference type="Gene3D" id="3.10.20.730">
    <property type="entry name" value="RNAP, epsilon subunit-like"/>
    <property type="match status" value="1"/>
</dbReference>
<dbReference type="HAMAP" id="MF_01553">
    <property type="entry name" value="RNApol_bact_RpoY"/>
    <property type="match status" value="1"/>
</dbReference>
<dbReference type="InterPro" id="IPR009907">
    <property type="entry name" value="RpoY"/>
</dbReference>
<dbReference type="NCBIfam" id="NF010188">
    <property type="entry name" value="PRK13667.1"/>
    <property type="match status" value="1"/>
</dbReference>
<dbReference type="Pfam" id="PF07288">
    <property type="entry name" value="RpoY"/>
    <property type="match status" value="1"/>
</dbReference>
<proteinExistence type="inferred from homology"/>
<evidence type="ECO:0000255" key="1">
    <source>
        <dbReference type="HAMAP-Rule" id="MF_01553"/>
    </source>
</evidence>
<feature type="chain" id="PRO_1000199617" description="DNA-directed RNA polymerase subunit epsilon">
    <location>
        <begin position="1"/>
        <end position="70"/>
    </location>
</feature>